<proteinExistence type="inferred from homology"/>
<protein>
    <recommendedName>
        <fullName evidence="1">DNA-directed RNA polymerase subunit beta</fullName>
        <shortName evidence="1">RNAP subunit beta</shortName>
        <ecNumber evidence="1">2.7.7.6</ecNumber>
    </recommendedName>
    <alternativeName>
        <fullName evidence="1">RNA polymerase subunit beta</fullName>
    </alternativeName>
    <alternativeName>
        <fullName evidence="1">Transcriptase subunit beta</fullName>
    </alternativeName>
</protein>
<feature type="chain" id="PRO_0000300277" description="DNA-directed RNA polymerase subunit beta">
    <location>
        <begin position="1"/>
        <end position="1173"/>
    </location>
</feature>
<feature type="region of interest" description="Disordered" evidence="2">
    <location>
        <begin position="1"/>
        <end position="23"/>
    </location>
</feature>
<feature type="compositionally biased region" description="Low complexity" evidence="2">
    <location>
        <begin position="8"/>
        <end position="22"/>
    </location>
</feature>
<reference key="1">
    <citation type="journal article" date="2006" name="PLoS Genet.">
        <title>Secrets of soil survival revealed by the genome sequence of Arthrobacter aurescens TC1.</title>
        <authorList>
            <person name="Mongodin E.F."/>
            <person name="Shapir N."/>
            <person name="Daugherty S.C."/>
            <person name="DeBoy R.T."/>
            <person name="Emerson J.B."/>
            <person name="Shvartzbeyn A."/>
            <person name="Radune D."/>
            <person name="Vamathevan J."/>
            <person name="Riggs F."/>
            <person name="Grinberg V."/>
            <person name="Khouri H.M."/>
            <person name="Wackett L.P."/>
            <person name="Nelson K.E."/>
            <person name="Sadowsky M.J."/>
        </authorList>
    </citation>
    <scope>NUCLEOTIDE SEQUENCE [LARGE SCALE GENOMIC DNA]</scope>
    <source>
        <strain>TC1</strain>
    </source>
</reference>
<gene>
    <name evidence="1" type="primary">rpoB</name>
    <name type="ordered locus">AAur_2957</name>
</gene>
<dbReference type="EC" id="2.7.7.6" evidence="1"/>
<dbReference type="EMBL" id="CP000474">
    <property type="protein sequence ID" value="ABM06631.1"/>
    <property type="molecule type" value="Genomic_DNA"/>
</dbReference>
<dbReference type="SMR" id="A1R8V4"/>
<dbReference type="STRING" id="290340.AAur_2957"/>
<dbReference type="KEGG" id="aau:AAur_2957"/>
<dbReference type="eggNOG" id="COG0085">
    <property type="taxonomic scope" value="Bacteria"/>
</dbReference>
<dbReference type="HOGENOM" id="CLU_000524_4_3_11"/>
<dbReference type="Proteomes" id="UP000000637">
    <property type="component" value="Chromosome"/>
</dbReference>
<dbReference type="GO" id="GO:0000428">
    <property type="term" value="C:DNA-directed RNA polymerase complex"/>
    <property type="evidence" value="ECO:0007669"/>
    <property type="project" value="UniProtKB-KW"/>
</dbReference>
<dbReference type="GO" id="GO:0003677">
    <property type="term" value="F:DNA binding"/>
    <property type="evidence" value="ECO:0007669"/>
    <property type="project" value="UniProtKB-UniRule"/>
</dbReference>
<dbReference type="GO" id="GO:0003899">
    <property type="term" value="F:DNA-directed RNA polymerase activity"/>
    <property type="evidence" value="ECO:0007669"/>
    <property type="project" value="UniProtKB-UniRule"/>
</dbReference>
<dbReference type="GO" id="GO:0032549">
    <property type="term" value="F:ribonucleoside binding"/>
    <property type="evidence" value="ECO:0007669"/>
    <property type="project" value="InterPro"/>
</dbReference>
<dbReference type="GO" id="GO:0006351">
    <property type="term" value="P:DNA-templated transcription"/>
    <property type="evidence" value="ECO:0007669"/>
    <property type="project" value="UniProtKB-UniRule"/>
</dbReference>
<dbReference type="CDD" id="cd00653">
    <property type="entry name" value="RNA_pol_B_RPB2"/>
    <property type="match status" value="1"/>
</dbReference>
<dbReference type="FunFam" id="3.90.1800.10:FF:000001">
    <property type="entry name" value="DNA-directed RNA polymerase subunit beta"/>
    <property type="match status" value="1"/>
</dbReference>
<dbReference type="Gene3D" id="2.40.50.100">
    <property type="match status" value="1"/>
</dbReference>
<dbReference type="Gene3D" id="2.40.50.150">
    <property type="match status" value="1"/>
</dbReference>
<dbReference type="Gene3D" id="3.90.1100.10">
    <property type="match status" value="1"/>
</dbReference>
<dbReference type="Gene3D" id="2.30.150.10">
    <property type="entry name" value="DNA-directed RNA polymerase, beta subunit, external 1 domain"/>
    <property type="match status" value="1"/>
</dbReference>
<dbReference type="Gene3D" id="2.40.270.10">
    <property type="entry name" value="DNA-directed RNA polymerase, subunit 2, domain 6"/>
    <property type="match status" value="1"/>
</dbReference>
<dbReference type="Gene3D" id="3.90.1800.10">
    <property type="entry name" value="RNA polymerase alpha subunit dimerisation domain"/>
    <property type="match status" value="1"/>
</dbReference>
<dbReference type="Gene3D" id="3.90.1110.10">
    <property type="entry name" value="RNA polymerase Rpb2, domain 2"/>
    <property type="match status" value="1"/>
</dbReference>
<dbReference type="HAMAP" id="MF_01321">
    <property type="entry name" value="RNApol_bact_RpoB"/>
    <property type="match status" value="1"/>
</dbReference>
<dbReference type="InterPro" id="IPR042107">
    <property type="entry name" value="DNA-dir_RNA_pol_bsu_ext_1_sf"/>
</dbReference>
<dbReference type="InterPro" id="IPR019462">
    <property type="entry name" value="DNA-dir_RNA_pol_bsu_external_1"/>
</dbReference>
<dbReference type="InterPro" id="IPR015712">
    <property type="entry name" value="DNA-dir_RNA_pol_su2"/>
</dbReference>
<dbReference type="InterPro" id="IPR007120">
    <property type="entry name" value="DNA-dir_RNAP_su2_dom"/>
</dbReference>
<dbReference type="InterPro" id="IPR037033">
    <property type="entry name" value="DNA-dir_RNAP_su2_hyb_sf"/>
</dbReference>
<dbReference type="InterPro" id="IPR010243">
    <property type="entry name" value="RNA_pol_bsu_bac"/>
</dbReference>
<dbReference type="InterPro" id="IPR007121">
    <property type="entry name" value="RNA_pol_bsu_CS"/>
</dbReference>
<dbReference type="InterPro" id="IPR007644">
    <property type="entry name" value="RNA_pol_bsu_protrusion"/>
</dbReference>
<dbReference type="InterPro" id="IPR007642">
    <property type="entry name" value="RNA_pol_Rpb2_2"/>
</dbReference>
<dbReference type="InterPro" id="IPR037034">
    <property type="entry name" value="RNA_pol_Rpb2_2_sf"/>
</dbReference>
<dbReference type="InterPro" id="IPR007645">
    <property type="entry name" value="RNA_pol_Rpb2_3"/>
</dbReference>
<dbReference type="InterPro" id="IPR007641">
    <property type="entry name" value="RNA_pol_Rpb2_7"/>
</dbReference>
<dbReference type="InterPro" id="IPR014724">
    <property type="entry name" value="RNA_pol_RPB2_OB-fold"/>
</dbReference>
<dbReference type="NCBIfam" id="NF001616">
    <property type="entry name" value="PRK00405.1"/>
    <property type="match status" value="1"/>
</dbReference>
<dbReference type="NCBIfam" id="TIGR02013">
    <property type="entry name" value="rpoB"/>
    <property type="match status" value="1"/>
</dbReference>
<dbReference type="PANTHER" id="PTHR20856">
    <property type="entry name" value="DNA-DIRECTED RNA POLYMERASE I SUBUNIT 2"/>
    <property type="match status" value="1"/>
</dbReference>
<dbReference type="Pfam" id="PF04563">
    <property type="entry name" value="RNA_pol_Rpb2_1"/>
    <property type="match status" value="1"/>
</dbReference>
<dbReference type="Pfam" id="PF04561">
    <property type="entry name" value="RNA_pol_Rpb2_2"/>
    <property type="match status" value="1"/>
</dbReference>
<dbReference type="Pfam" id="PF04565">
    <property type="entry name" value="RNA_pol_Rpb2_3"/>
    <property type="match status" value="1"/>
</dbReference>
<dbReference type="Pfam" id="PF10385">
    <property type="entry name" value="RNA_pol_Rpb2_45"/>
    <property type="match status" value="1"/>
</dbReference>
<dbReference type="Pfam" id="PF00562">
    <property type="entry name" value="RNA_pol_Rpb2_6"/>
    <property type="match status" value="1"/>
</dbReference>
<dbReference type="Pfam" id="PF04560">
    <property type="entry name" value="RNA_pol_Rpb2_7"/>
    <property type="match status" value="1"/>
</dbReference>
<dbReference type="SUPFAM" id="SSF64484">
    <property type="entry name" value="beta and beta-prime subunits of DNA dependent RNA-polymerase"/>
    <property type="match status" value="1"/>
</dbReference>
<dbReference type="PROSITE" id="PS01166">
    <property type="entry name" value="RNA_POL_BETA"/>
    <property type="match status" value="1"/>
</dbReference>
<name>RPOB_PAEAT</name>
<keyword id="KW-0240">DNA-directed RNA polymerase</keyword>
<keyword id="KW-0548">Nucleotidyltransferase</keyword>
<keyword id="KW-0804">Transcription</keyword>
<keyword id="KW-0808">Transferase</keyword>
<comment type="function">
    <text evidence="1">DNA-dependent RNA polymerase catalyzes the transcription of DNA into RNA using the four ribonucleoside triphosphates as substrates.</text>
</comment>
<comment type="catalytic activity">
    <reaction evidence="1">
        <text>RNA(n) + a ribonucleoside 5'-triphosphate = RNA(n+1) + diphosphate</text>
        <dbReference type="Rhea" id="RHEA:21248"/>
        <dbReference type="Rhea" id="RHEA-COMP:14527"/>
        <dbReference type="Rhea" id="RHEA-COMP:17342"/>
        <dbReference type="ChEBI" id="CHEBI:33019"/>
        <dbReference type="ChEBI" id="CHEBI:61557"/>
        <dbReference type="ChEBI" id="CHEBI:140395"/>
        <dbReference type="EC" id="2.7.7.6"/>
    </reaction>
</comment>
<comment type="subunit">
    <text evidence="1">The RNAP catalytic core consists of 2 alpha, 1 beta, 1 beta' and 1 omega subunit. When a sigma factor is associated with the core the holoenzyme is formed, which can initiate transcription.</text>
</comment>
<comment type="similarity">
    <text evidence="1">Belongs to the RNA polymerase beta chain family.</text>
</comment>
<accession>A1R8V4</accession>
<sequence length="1173" mass="128956">MEGSLLVASSTSNNETANTASTDGATRRLSFAKIHEPLDVPNLLALQTDSFDWLVGNERWQARVAKAVEEGDLSVATTSGLADIFEEISPIEDFQGTMSLSFSEPEFADPKYTMAECKDRDATYSAPLYVKAEFMNNNTGEIKQQTVFMGDFPLMTEKGTFVVNGTERVVVSQLVRSPGAYFERTADKTSDKDIFTAKIIPSRGAWFELEIDKRDQVGVRLDRKRKQSVTVLLKALGWTEGQILEEFGQYDSMRATLEKDATETREDALLDIYRKLRPGEPPTVEAAQSLLDNLYFNAKRYDLAKVGRYKINRKLGIDRSLGDKEASVLHVEDIVAMIKFLVALHAGEKTLMGKRDGEDHELRVDVDDIDHFGNRRIRAVGELIENQVRTGLSRMERVVRERMTTQDVEAITPQTLINIRPVVAAIKEFFGTSQLSQFMDQNNPLSGLTHKRRLSALGPGGLSRDRAGMEVRDVHPSHYGRMCPIETPEGPNIGLIGSLASYGRINPFGFIETPYRLVSEGVVSDEVQYLTADDEAEVLIAQANAPLDADKKFSEETVLVRARGGGGEPVLVPAADVQFMDVSPRQMVSVATALIPFLEHDDANRALMGANMQRQAVPLVRSEAPFVGTGMERAAAVDAGDVVIAKKAGVVTEVSAELVVMINDDGTETNYRINKFARSNQGNCYNHRVLVNEGQRLEVGGIIADGPATDQGELALGKNLLVAFMSWEGHNFEDAIILSQRIVAEDVLSSIHIEEHEIDARDTKLGAEEITRDIPNVSEEVLAGLDERGIIHIGAEVEAGDILVGKVTPKGETELTPEERLLRAIFGEKSREVRDTSLKVPHGESGTVIGVRVFDRDNDDELPPGVNQLVRVYVAAKRKITDGDKLAGRHGNKGVISKILPIEDMPFLADGTPVDIVLNPLGVPGRMNVGQVLETHLGWVAKTGWKIEGEPEWVKNLPNLPRETGQTTVATPVFDGAREEEITGLLDSTNVTRDGDRLIDSSGKTRLFDGRSGEPFPDPISVGYMYILKLHHLVDDKIHARSTGPYSMITQQPLGGKAQFGGQRFGEMEVWALEAYGAAYTLQELLTIKSDDIHGRVKVYEAIVKGENIPEPGVPESFKVLIKEMQSLCLNVEVLSTDGTTIEMRDSDDAVFTAAEELGIDLSRAEPSSVEEV</sequence>
<organism>
    <name type="scientific">Paenarthrobacter aurescens (strain TC1)</name>
    <dbReference type="NCBI Taxonomy" id="290340"/>
    <lineage>
        <taxon>Bacteria</taxon>
        <taxon>Bacillati</taxon>
        <taxon>Actinomycetota</taxon>
        <taxon>Actinomycetes</taxon>
        <taxon>Micrococcales</taxon>
        <taxon>Micrococcaceae</taxon>
        <taxon>Paenarthrobacter</taxon>
    </lineage>
</organism>
<evidence type="ECO:0000255" key="1">
    <source>
        <dbReference type="HAMAP-Rule" id="MF_01321"/>
    </source>
</evidence>
<evidence type="ECO:0000256" key="2">
    <source>
        <dbReference type="SAM" id="MobiDB-lite"/>
    </source>
</evidence>